<proteinExistence type="inferred from homology"/>
<dbReference type="EMBL" id="CP001100">
    <property type="protein sequence ID" value="ACF14760.1"/>
    <property type="molecule type" value="Genomic_DNA"/>
</dbReference>
<dbReference type="RefSeq" id="WP_012500842.1">
    <property type="nucleotide sequence ID" value="NC_011026.1"/>
</dbReference>
<dbReference type="SMR" id="B3QWK0"/>
<dbReference type="STRING" id="517418.Ctha_2309"/>
<dbReference type="KEGG" id="cts:Ctha_2309"/>
<dbReference type="eggNOG" id="COG1219">
    <property type="taxonomic scope" value="Bacteria"/>
</dbReference>
<dbReference type="HOGENOM" id="CLU_014218_8_2_10"/>
<dbReference type="OrthoDB" id="9804062at2"/>
<dbReference type="Proteomes" id="UP000001208">
    <property type="component" value="Chromosome"/>
</dbReference>
<dbReference type="GO" id="GO:0009376">
    <property type="term" value="C:HslUV protease complex"/>
    <property type="evidence" value="ECO:0007669"/>
    <property type="project" value="TreeGrafter"/>
</dbReference>
<dbReference type="GO" id="GO:0005524">
    <property type="term" value="F:ATP binding"/>
    <property type="evidence" value="ECO:0007669"/>
    <property type="project" value="UniProtKB-UniRule"/>
</dbReference>
<dbReference type="GO" id="GO:0016887">
    <property type="term" value="F:ATP hydrolysis activity"/>
    <property type="evidence" value="ECO:0007669"/>
    <property type="project" value="InterPro"/>
</dbReference>
<dbReference type="GO" id="GO:0140662">
    <property type="term" value="F:ATP-dependent protein folding chaperone"/>
    <property type="evidence" value="ECO:0007669"/>
    <property type="project" value="InterPro"/>
</dbReference>
<dbReference type="GO" id="GO:0046983">
    <property type="term" value="F:protein dimerization activity"/>
    <property type="evidence" value="ECO:0007669"/>
    <property type="project" value="InterPro"/>
</dbReference>
<dbReference type="GO" id="GO:0051082">
    <property type="term" value="F:unfolded protein binding"/>
    <property type="evidence" value="ECO:0007669"/>
    <property type="project" value="UniProtKB-UniRule"/>
</dbReference>
<dbReference type="GO" id="GO:0008270">
    <property type="term" value="F:zinc ion binding"/>
    <property type="evidence" value="ECO:0007669"/>
    <property type="project" value="InterPro"/>
</dbReference>
<dbReference type="GO" id="GO:0051301">
    <property type="term" value="P:cell division"/>
    <property type="evidence" value="ECO:0007669"/>
    <property type="project" value="TreeGrafter"/>
</dbReference>
<dbReference type="GO" id="GO:0051603">
    <property type="term" value="P:proteolysis involved in protein catabolic process"/>
    <property type="evidence" value="ECO:0007669"/>
    <property type="project" value="TreeGrafter"/>
</dbReference>
<dbReference type="CDD" id="cd19497">
    <property type="entry name" value="RecA-like_ClpX"/>
    <property type="match status" value="1"/>
</dbReference>
<dbReference type="FunFam" id="1.10.8.60:FF:000002">
    <property type="entry name" value="ATP-dependent Clp protease ATP-binding subunit ClpX"/>
    <property type="match status" value="1"/>
</dbReference>
<dbReference type="FunFam" id="3.40.50.300:FF:000005">
    <property type="entry name" value="ATP-dependent Clp protease ATP-binding subunit ClpX"/>
    <property type="match status" value="1"/>
</dbReference>
<dbReference type="Gene3D" id="1.10.8.60">
    <property type="match status" value="1"/>
</dbReference>
<dbReference type="Gene3D" id="6.20.220.10">
    <property type="entry name" value="ClpX chaperone, C4-type zinc finger domain"/>
    <property type="match status" value="1"/>
</dbReference>
<dbReference type="Gene3D" id="3.40.50.300">
    <property type="entry name" value="P-loop containing nucleotide triphosphate hydrolases"/>
    <property type="match status" value="1"/>
</dbReference>
<dbReference type="HAMAP" id="MF_00175">
    <property type="entry name" value="ClpX"/>
    <property type="match status" value="1"/>
</dbReference>
<dbReference type="InterPro" id="IPR003593">
    <property type="entry name" value="AAA+_ATPase"/>
</dbReference>
<dbReference type="InterPro" id="IPR050052">
    <property type="entry name" value="ATP-dep_Clp_protease_ClpX"/>
</dbReference>
<dbReference type="InterPro" id="IPR003959">
    <property type="entry name" value="ATPase_AAA_core"/>
</dbReference>
<dbReference type="InterPro" id="IPR019489">
    <property type="entry name" value="Clp_ATPase_C"/>
</dbReference>
<dbReference type="InterPro" id="IPR004487">
    <property type="entry name" value="Clp_protease_ATP-bd_su_ClpX"/>
</dbReference>
<dbReference type="InterPro" id="IPR046425">
    <property type="entry name" value="ClpX_bact"/>
</dbReference>
<dbReference type="InterPro" id="IPR027417">
    <property type="entry name" value="P-loop_NTPase"/>
</dbReference>
<dbReference type="InterPro" id="IPR010603">
    <property type="entry name" value="Znf_CppX_C4"/>
</dbReference>
<dbReference type="InterPro" id="IPR038366">
    <property type="entry name" value="Znf_CppX_C4_sf"/>
</dbReference>
<dbReference type="NCBIfam" id="TIGR00382">
    <property type="entry name" value="clpX"/>
    <property type="match status" value="1"/>
</dbReference>
<dbReference type="NCBIfam" id="NF003745">
    <property type="entry name" value="PRK05342.1"/>
    <property type="match status" value="1"/>
</dbReference>
<dbReference type="PANTHER" id="PTHR48102:SF7">
    <property type="entry name" value="ATP-DEPENDENT CLP PROTEASE ATP-BINDING SUBUNIT CLPX-LIKE, MITOCHONDRIAL"/>
    <property type="match status" value="1"/>
</dbReference>
<dbReference type="PANTHER" id="PTHR48102">
    <property type="entry name" value="ATP-DEPENDENT CLP PROTEASE ATP-BINDING SUBUNIT CLPX-LIKE, MITOCHONDRIAL-RELATED"/>
    <property type="match status" value="1"/>
</dbReference>
<dbReference type="Pfam" id="PF07724">
    <property type="entry name" value="AAA_2"/>
    <property type="match status" value="1"/>
</dbReference>
<dbReference type="Pfam" id="PF10431">
    <property type="entry name" value="ClpB_D2-small"/>
    <property type="match status" value="1"/>
</dbReference>
<dbReference type="Pfam" id="PF06689">
    <property type="entry name" value="zf-C4_ClpX"/>
    <property type="match status" value="1"/>
</dbReference>
<dbReference type="SMART" id="SM00382">
    <property type="entry name" value="AAA"/>
    <property type="match status" value="1"/>
</dbReference>
<dbReference type="SMART" id="SM01086">
    <property type="entry name" value="ClpB_D2-small"/>
    <property type="match status" value="1"/>
</dbReference>
<dbReference type="SMART" id="SM00994">
    <property type="entry name" value="zf-C4_ClpX"/>
    <property type="match status" value="1"/>
</dbReference>
<dbReference type="SUPFAM" id="SSF57716">
    <property type="entry name" value="Glucocorticoid receptor-like (DNA-binding domain)"/>
    <property type="match status" value="1"/>
</dbReference>
<dbReference type="SUPFAM" id="SSF52540">
    <property type="entry name" value="P-loop containing nucleoside triphosphate hydrolases"/>
    <property type="match status" value="1"/>
</dbReference>
<dbReference type="PROSITE" id="PS51902">
    <property type="entry name" value="CLPX_ZB"/>
    <property type="match status" value="1"/>
</dbReference>
<protein>
    <recommendedName>
        <fullName evidence="1">ATP-dependent Clp protease ATP-binding subunit ClpX</fullName>
    </recommendedName>
</protein>
<comment type="function">
    <text evidence="1">ATP-dependent specificity component of the Clp protease. It directs the protease to specific substrates. Can perform chaperone functions in the absence of ClpP.</text>
</comment>
<comment type="subunit">
    <text evidence="1">Component of the ClpX-ClpP complex. Forms a hexameric ring that, in the presence of ATP, binds to fourteen ClpP subunits assembled into a disk-like structure with a central cavity, resembling the structure of eukaryotic proteasomes.</text>
</comment>
<comment type="similarity">
    <text evidence="1">Belongs to the ClpX chaperone family.</text>
</comment>
<evidence type="ECO:0000255" key="1">
    <source>
        <dbReference type="HAMAP-Rule" id="MF_00175"/>
    </source>
</evidence>
<evidence type="ECO:0000255" key="2">
    <source>
        <dbReference type="PROSITE-ProRule" id="PRU01250"/>
    </source>
</evidence>
<reference key="1">
    <citation type="submission" date="2008-06" db="EMBL/GenBank/DDBJ databases">
        <title>Complete sequence of Chloroherpeton thalassium ATCC 35110.</title>
        <authorList>
            <consortium name="US DOE Joint Genome Institute"/>
            <person name="Lucas S."/>
            <person name="Copeland A."/>
            <person name="Lapidus A."/>
            <person name="Glavina del Rio T."/>
            <person name="Dalin E."/>
            <person name="Tice H."/>
            <person name="Bruce D."/>
            <person name="Goodwin L."/>
            <person name="Pitluck S."/>
            <person name="Schmutz J."/>
            <person name="Larimer F."/>
            <person name="Land M."/>
            <person name="Hauser L."/>
            <person name="Kyrpides N."/>
            <person name="Mikhailova N."/>
            <person name="Liu Z."/>
            <person name="Li T."/>
            <person name="Zhao F."/>
            <person name="Overmann J."/>
            <person name="Bryant D.A."/>
            <person name="Richardson P."/>
        </authorList>
    </citation>
    <scope>NUCLEOTIDE SEQUENCE [LARGE SCALE GENOMIC DNA]</scope>
    <source>
        <strain>ATCC 35110 / GB-78</strain>
    </source>
</reference>
<sequence>MAKGKQSGSSNSRDELMVNCSFCGRSSDEVNSMIAGPNAFICDRCIQSAVDIIKHDLSAITTKRRSNKTAKLVKPTEIRDELNKYVVGQERAKKALAVAVYNHYKRIESQEWLLEEDDVVIEKSNILLIGPTGTGKTLLAQTLANILDVPFTIVDATSLTEAGYVGDDVESILARLLQAADYNLERAEKGIIYIDEIDKIARKSANVSITRDVSGEGVQQALLKILEGTVAGVPPKGGRKHPEQHLINVNTKNILFICGGAFEGLEKVISRRLAQNAMGFGTAITAASEKESIELISKVTPEDLYQFGLIPEFIGRMPFIATLDPLNKEALKNILIEPKNAITKQYKKLFEMENVELIFDTDALDLVVDTAVKRGTGARALRSVLEEVMLNIMFDLPNMNEVKTCIITKECIEKKAEPMYLYGESERKKSA</sequence>
<organism>
    <name type="scientific">Chloroherpeton thalassium (strain ATCC 35110 / GB-78)</name>
    <dbReference type="NCBI Taxonomy" id="517418"/>
    <lineage>
        <taxon>Bacteria</taxon>
        <taxon>Pseudomonadati</taxon>
        <taxon>Chlorobiota</taxon>
        <taxon>Chlorobiia</taxon>
        <taxon>Chlorobiales</taxon>
        <taxon>Chloroherpetonaceae</taxon>
        <taxon>Chloroherpeton</taxon>
    </lineage>
</organism>
<name>CLPX_CHLT3</name>
<accession>B3QWK0</accession>
<feature type="chain" id="PRO_1000189683" description="ATP-dependent Clp protease ATP-binding subunit ClpX">
    <location>
        <begin position="1"/>
        <end position="431"/>
    </location>
</feature>
<feature type="domain" description="ClpX-type ZB" evidence="2">
    <location>
        <begin position="6"/>
        <end position="61"/>
    </location>
</feature>
<feature type="binding site" evidence="2">
    <location>
        <position position="20"/>
    </location>
    <ligand>
        <name>Zn(2+)</name>
        <dbReference type="ChEBI" id="CHEBI:29105"/>
    </ligand>
</feature>
<feature type="binding site" evidence="2">
    <location>
        <position position="23"/>
    </location>
    <ligand>
        <name>Zn(2+)</name>
        <dbReference type="ChEBI" id="CHEBI:29105"/>
    </ligand>
</feature>
<feature type="binding site" evidence="2">
    <location>
        <position position="42"/>
    </location>
    <ligand>
        <name>Zn(2+)</name>
        <dbReference type="ChEBI" id="CHEBI:29105"/>
    </ligand>
</feature>
<feature type="binding site" evidence="2">
    <location>
        <position position="45"/>
    </location>
    <ligand>
        <name>Zn(2+)</name>
        <dbReference type="ChEBI" id="CHEBI:29105"/>
    </ligand>
</feature>
<feature type="binding site" evidence="1">
    <location>
        <begin position="131"/>
        <end position="138"/>
    </location>
    <ligand>
        <name>ATP</name>
        <dbReference type="ChEBI" id="CHEBI:30616"/>
    </ligand>
</feature>
<gene>
    <name evidence="1" type="primary">clpX</name>
    <name type="ordered locus">Ctha_2309</name>
</gene>
<keyword id="KW-0067">ATP-binding</keyword>
<keyword id="KW-0143">Chaperone</keyword>
<keyword id="KW-0479">Metal-binding</keyword>
<keyword id="KW-0547">Nucleotide-binding</keyword>
<keyword id="KW-1185">Reference proteome</keyword>
<keyword id="KW-0862">Zinc</keyword>